<gene>
    <name evidence="1" type="primary">mdh</name>
    <name type="ordered locus">XC_3307</name>
</gene>
<dbReference type="EC" id="1.1.1.37" evidence="1"/>
<dbReference type="EMBL" id="CP000050">
    <property type="protein sequence ID" value="AAY50351.1"/>
    <property type="molecule type" value="Genomic_DNA"/>
</dbReference>
<dbReference type="RefSeq" id="WP_011036142.1">
    <property type="nucleotide sequence ID" value="NZ_CP155948.1"/>
</dbReference>
<dbReference type="SMR" id="Q4URH2"/>
<dbReference type="KEGG" id="xcb:XC_3307"/>
<dbReference type="HOGENOM" id="CLU_040727_2_0_6"/>
<dbReference type="Proteomes" id="UP000000420">
    <property type="component" value="Chromosome"/>
</dbReference>
<dbReference type="GO" id="GO:0030060">
    <property type="term" value="F:L-malate dehydrogenase (NAD+) activity"/>
    <property type="evidence" value="ECO:0007669"/>
    <property type="project" value="UniProtKB-UniRule"/>
</dbReference>
<dbReference type="GO" id="GO:0006108">
    <property type="term" value="P:malate metabolic process"/>
    <property type="evidence" value="ECO:0007669"/>
    <property type="project" value="InterPro"/>
</dbReference>
<dbReference type="GO" id="GO:0006099">
    <property type="term" value="P:tricarboxylic acid cycle"/>
    <property type="evidence" value="ECO:0007669"/>
    <property type="project" value="UniProtKB-UniRule"/>
</dbReference>
<dbReference type="CDD" id="cd01338">
    <property type="entry name" value="MDH_chloroplast-like"/>
    <property type="match status" value="1"/>
</dbReference>
<dbReference type="FunFam" id="3.40.50.720:FF:000010">
    <property type="entry name" value="Malate dehydrogenase"/>
    <property type="match status" value="1"/>
</dbReference>
<dbReference type="FunFam" id="3.90.110.10:FF:000002">
    <property type="entry name" value="Malate dehydrogenase"/>
    <property type="match status" value="1"/>
</dbReference>
<dbReference type="Gene3D" id="3.90.110.10">
    <property type="entry name" value="Lactate dehydrogenase/glycoside hydrolase, family 4, C-terminal"/>
    <property type="match status" value="1"/>
</dbReference>
<dbReference type="Gene3D" id="3.40.50.720">
    <property type="entry name" value="NAD(P)-binding Rossmann-like Domain"/>
    <property type="match status" value="1"/>
</dbReference>
<dbReference type="HAMAP" id="MF_01517">
    <property type="entry name" value="Malate_dehydrog_2"/>
    <property type="match status" value="1"/>
</dbReference>
<dbReference type="InterPro" id="IPR001557">
    <property type="entry name" value="L-lactate/malate_DH"/>
</dbReference>
<dbReference type="InterPro" id="IPR022383">
    <property type="entry name" value="Lactate/malate_DH_C"/>
</dbReference>
<dbReference type="InterPro" id="IPR001236">
    <property type="entry name" value="Lactate/malate_DH_N"/>
</dbReference>
<dbReference type="InterPro" id="IPR015955">
    <property type="entry name" value="Lactate_DH/Glyco_Ohase_4_C"/>
</dbReference>
<dbReference type="InterPro" id="IPR010945">
    <property type="entry name" value="Malate_DH_type2"/>
</dbReference>
<dbReference type="InterPro" id="IPR036291">
    <property type="entry name" value="NAD(P)-bd_dom_sf"/>
</dbReference>
<dbReference type="NCBIfam" id="TIGR01759">
    <property type="entry name" value="MalateDH-SF1"/>
    <property type="match status" value="1"/>
</dbReference>
<dbReference type="NCBIfam" id="NF003916">
    <property type="entry name" value="PRK05442.1"/>
    <property type="match status" value="1"/>
</dbReference>
<dbReference type="PANTHER" id="PTHR23382">
    <property type="entry name" value="MALATE DEHYDROGENASE"/>
    <property type="match status" value="1"/>
</dbReference>
<dbReference type="Pfam" id="PF02866">
    <property type="entry name" value="Ldh_1_C"/>
    <property type="match status" value="1"/>
</dbReference>
<dbReference type="Pfam" id="PF00056">
    <property type="entry name" value="Ldh_1_N"/>
    <property type="match status" value="1"/>
</dbReference>
<dbReference type="PIRSF" id="PIRSF000102">
    <property type="entry name" value="Lac_mal_DH"/>
    <property type="match status" value="1"/>
</dbReference>
<dbReference type="SUPFAM" id="SSF56327">
    <property type="entry name" value="LDH C-terminal domain-like"/>
    <property type="match status" value="1"/>
</dbReference>
<dbReference type="SUPFAM" id="SSF51735">
    <property type="entry name" value="NAD(P)-binding Rossmann-fold domains"/>
    <property type="match status" value="1"/>
</dbReference>
<name>MDH_XANC8</name>
<proteinExistence type="inferred from homology"/>
<sequence length="328" mass="34935">MKAPVRVAVTGAAGQIGYALLFRIASGEMLGKDQPVILQLLELSNEKAQAALKGVMMELEDCAFPLLAGMVGTDDAEVAFKDIDVALLVGARPRGPGMERKDLLLENAKIFTAQGAALNKVAKRDVKVLVVGNPANTNAYIAMKSAPDLNPKNFTAMLRLDHNRALSQLSLKLGKPVGGIEKLVVWGNHSPTMYPDYRFATSDGASIGDAINDQEWNAGTFIPTVGKRGAAIIEARGLSSAASAANAAIDHVRDWVLGSNGKWVTMGVPSDGSYGIPEGVIFGFPVTTENGQYTLVKDLPIDDFSQKYIDKTLAELEEERSGVSHLLG</sequence>
<keyword id="KW-0520">NAD</keyword>
<keyword id="KW-0560">Oxidoreductase</keyword>
<keyword id="KW-0816">Tricarboxylic acid cycle</keyword>
<organism>
    <name type="scientific">Xanthomonas campestris pv. campestris (strain 8004)</name>
    <dbReference type="NCBI Taxonomy" id="314565"/>
    <lineage>
        <taxon>Bacteria</taxon>
        <taxon>Pseudomonadati</taxon>
        <taxon>Pseudomonadota</taxon>
        <taxon>Gammaproteobacteria</taxon>
        <taxon>Lysobacterales</taxon>
        <taxon>Lysobacteraceae</taxon>
        <taxon>Xanthomonas</taxon>
    </lineage>
</organism>
<comment type="function">
    <text evidence="1">Catalyzes the reversible oxidation of malate to oxaloacetate.</text>
</comment>
<comment type="catalytic activity">
    <reaction evidence="1">
        <text>(S)-malate + NAD(+) = oxaloacetate + NADH + H(+)</text>
        <dbReference type="Rhea" id="RHEA:21432"/>
        <dbReference type="ChEBI" id="CHEBI:15378"/>
        <dbReference type="ChEBI" id="CHEBI:15589"/>
        <dbReference type="ChEBI" id="CHEBI:16452"/>
        <dbReference type="ChEBI" id="CHEBI:57540"/>
        <dbReference type="ChEBI" id="CHEBI:57945"/>
        <dbReference type="EC" id="1.1.1.37"/>
    </reaction>
</comment>
<comment type="similarity">
    <text evidence="1">Belongs to the LDH/MDH superfamily. MDH type 2 family.</text>
</comment>
<accession>Q4URH2</accession>
<feature type="chain" id="PRO_0000113403" description="Malate dehydrogenase">
    <location>
        <begin position="1"/>
        <end position="328"/>
    </location>
</feature>
<feature type="active site" description="Proton acceptor" evidence="1">
    <location>
        <position position="189"/>
    </location>
</feature>
<feature type="binding site" evidence="1">
    <location>
        <begin position="11"/>
        <end position="17"/>
    </location>
    <ligand>
        <name>NAD(+)</name>
        <dbReference type="ChEBI" id="CHEBI:57540"/>
    </ligand>
</feature>
<feature type="binding site" evidence="1">
    <location>
        <position position="94"/>
    </location>
    <ligand>
        <name>substrate</name>
    </ligand>
</feature>
<feature type="binding site" evidence="1">
    <location>
        <position position="100"/>
    </location>
    <ligand>
        <name>substrate</name>
    </ligand>
</feature>
<feature type="binding site" evidence="1">
    <location>
        <position position="107"/>
    </location>
    <ligand>
        <name>NAD(+)</name>
        <dbReference type="ChEBI" id="CHEBI:57540"/>
    </ligand>
</feature>
<feature type="binding site" evidence="1">
    <location>
        <position position="114"/>
    </location>
    <ligand>
        <name>NAD(+)</name>
        <dbReference type="ChEBI" id="CHEBI:57540"/>
    </ligand>
</feature>
<feature type="binding site" evidence="1">
    <location>
        <begin position="131"/>
        <end position="133"/>
    </location>
    <ligand>
        <name>NAD(+)</name>
        <dbReference type="ChEBI" id="CHEBI:57540"/>
    </ligand>
</feature>
<feature type="binding site" evidence="1">
    <location>
        <position position="133"/>
    </location>
    <ligand>
        <name>substrate</name>
    </ligand>
</feature>
<feature type="binding site" evidence="1">
    <location>
        <position position="164"/>
    </location>
    <ligand>
        <name>substrate</name>
    </ligand>
</feature>
<reference key="1">
    <citation type="journal article" date="2005" name="Genome Res.">
        <title>Comparative and functional genomic analyses of the pathogenicity of phytopathogen Xanthomonas campestris pv. campestris.</title>
        <authorList>
            <person name="Qian W."/>
            <person name="Jia Y."/>
            <person name="Ren S.-X."/>
            <person name="He Y.-Q."/>
            <person name="Feng J.-X."/>
            <person name="Lu L.-F."/>
            <person name="Sun Q."/>
            <person name="Ying G."/>
            <person name="Tang D.-J."/>
            <person name="Tang H."/>
            <person name="Wu W."/>
            <person name="Hao P."/>
            <person name="Wang L."/>
            <person name="Jiang B.-L."/>
            <person name="Zeng S."/>
            <person name="Gu W.-Y."/>
            <person name="Lu G."/>
            <person name="Rong L."/>
            <person name="Tian Y."/>
            <person name="Yao Z."/>
            <person name="Fu G."/>
            <person name="Chen B."/>
            <person name="Fang R."/>
            <person name="Qiang B."/>
            <person name="Chen Z."/>
            <person name="Zhao G.-P."/>
            <person name="Tang J.-L."/>
            <person name="He C."/>
        </authorList>
    </citation>
    <scope>NUCLEOTIDE SEQUENCE [LARGE SCALE GENOMIC DNA]</scope>
    <source>
        <strain>8004</strain>
    </source>
</reference>
<protein>
    <recommendedName>
        <fullName evidence="1">Malate dehydrogenase</fullName>
        <ecNumber evidence="1">1.1.1.37</ecNumber>
    </recommendedName>
</protein>
<evidence type="ECO:0000255" key="1">
    <source>
        <dbReference type="HAMAP-Rule" id="MF_01517"/>
    </source>
</evidence>